<dbReference type="EC" id="4.98.1.1" evidence="1"/>
<dbReference type="EMBL" id="CP000749">
    <property type="protein sequence ID" value="ABR71137.1"/>
    <property type="molecule type" value="Genomic_DNA"/>
</dbReference>
<dbReference type="SMR" id="A6VXF8"/>
<dbReference type="STRING" id="400668.Mmwyl1_2215"/>
<dbReference type="KEGG" id="mmw:Mmwyl1_2215"/>
<dbReference type="eggNOG" id="COG0276">
    <property type="taxonomic scope" value="Bacteria"/>
</dbReference>
<dbReference type="HOGENOM" id="CLU_018884_0_0_6"/>
<dbReference type="OrthoDB" id="9809741at2"/>
<dbReference type="UniPathway" id="UPA00252">
    <property type="reaction ID" value="UER00325"/>
</dbReference>
<dbReference type="GO" id="GO:0005737">
    <property type="term" value="C:cytoplasm"/>
    <property type="evidence" value="ECO:0007669"/>
    <property type="project" value="UniProtKB-SubCell"/>
</dbReference>
<dbReference type="GO" id="GO:0004325">
    <property type="term" value="F:ferrochelatase activity"/>
    <property type="evidence" value="ECO:0007669"/>
    <property type="project" value="UniProtKB-UniRule"/>
</dbReference>
<dbReference type="GO" id="GO:0046872">
    <property type="term" value="F:metal ion binding"/>
    <property type="evidence" value="ECO:0007669"/>
    <property type="project" value="UniProtKB-KW"/>
</dbReference>
<dbReference type="GO" id="GO:0006783">
    <property type="term" value="P:heme biosynthetic process"/>
    <property type="evidence" value="ECO:0007669"/>
    <property type="project" value="UniProtKB-UniRule"/>
</dbReference>
<dbReference type="CDD" id="cd00419">
    <property type="entry name" value="Ferrochelatase_C"/>
    <property type="match status" value="1"/>
</dbReference>
<dbReference type="CDD" id="cd03411">
    <property type="entry name" value="Ferrochelatase_N"/>
    <property type="match status" value="1"/>
</dbReference>
<dbReference type="FunFam" id="3.40.50.1400:FF:000002">
    <property type="entry name" value="Ferrochelatase"/>
    <property type="match status" value="1"/>
</dbReference>
<dbReference type="Gene3D" id="3.40.50.1400">
    <property type="match status" value="2"/>
</dbReference>
<dbReference type="HAMAP" id="MF_00323">
    <property type="entry name" value="Ferrochelatase"/>
    <property type="match status" value="1"/>
</dbReference>
<dbReference type="InterPro" id="IPR001015">
    <property type="entry name" value="Ferrochelatase"/>
</dbReference>
<dbReference type="InterPro" id="IPR019772">
    <property type="entry name" value="Ferrochelatase_AS"/>
</dbReference>
<dbReference type="InterPro" id="IPR033644">
    <property type="entry name" value="Ferrochelatase_C"/>
</dbReference>
<dbReference type="InterPro" id="IPR033659">
    <property type="entry name" value="Ferrochelatase_N"/>
</dbReference>
<dbReference type="NCBIfam" id="TIGR00109">
    <property type="entry name" value="hemH"/>
    <property type="match status" value="1"/>
</dbReference>
<dbReference type="PANTHER" id="PTHR11108">
    <property type="entry name" value="FERROCHELATASE"/>
    <property type="match status" value="1"/>
</dbReference>
<dbReference type="PANTHER" id="PTHR11108:SF1">
    <property type="entry name" value="FERROCHELATASE, MITOCHONDRIAL"/>
    <property type="match status" value="1"/>
</dbReference>
<dbReference type="Pfam" id="PF00762">
    <property type="entry name" value="Ferrochelatase"/>
    <property type="match status" value="1"/>
</dbReference>
<dbReference type="SUPFAM" id="SSF53800">
    <property type="entry name" value="Chelatase"/>
    <property type="match status" value="1"/>
</dbReference>
<dbReference type="PROSITE" id="PS00534">
    <property type="entry name" value="FERROCHELATASE"/>
    <property type="match status" value="1"/>
</dbReference>
<keyword id="KW-0963">Cytoplasm</keyword>
<keyword id="KW-0350">Heme biosynthesis</keyword>
<keyword id="KW-0408">Iron</keyword>
<keyword id="KW-0456">Lyase</keyword>
<keyword id="KW-0479">Metal-binding</keyword>
<keyword id="KW-0627">Porphyrin biosynthesis</keyword>
<organism>
    <name type="scientific">Marinomonas sp. (strain MWYL1)</name>
    <dbReference type="NCBI Taxonomy" id="400668"/>
    <lineage>
        <taxon>Bacteria</taxon>
        <taxon>Pseudomonadati</taxon>
        <taxon>Pseudomonadota</taxon>
        <taxon>Gammaproteobacteria</taxon>
        <taxon>Oceanospirillales</taxon>
        <taxon>Oceanospirillaceae</taxon>
        <taxon>Marinomonas</taxon>
    </lineage>
</organism>
<reference key="1">
    <citation type="submission" date="2007-06" db="EMBL/GenBank/DDBJ databases">
        <title>Complete sequence of Marinomonas sp. MWYL1.</title>
        <authorList>
            <consortium name="US DOE Joint Genome Institute"/>
            <person name="Copeland A."/>
            <person name="Lucas S."/>
            <person name="Lapidus A."/>
            <person name="Barry K."/>
            <person name="Glavina del Rio T."/>
            <person name="Dalin E."/>
            <person name="Tice H."/>
            <person name="Pitluck S."/>
            <person name="Kiss H."/>
            <person name="Brettin T."/>
            <person name="Bruce D."/>
            <person name="Detter J.C."/>
            <person name="Han C."/>
            <person name="Schmutz J."/>
            <person name="Larimer F."/>
            <person name="Land M."/>
            <person name="Hauser L."/>
            <person name="Kyrpides N."/>
            <person name="Kim E."/>
            <person name="Johnston A.W.B."/>
            <person name="Todd J.D."/>
            <person name="Rogers R."/>
            <person name="Wexler M."/>
            <person name="Bond P.L."/>
            <person name="Li Y."/>
            <person name="Richardson P."/>
        </authorList>
    </citation>
    <scope>NUCLEOTIDE SEQUENCE [LARGE SCALE GENOMIC DNA]</scope>
    <source>
        <strain>MWYL1</strain>
    </source>
</reference>
<accession>A6VXF8</accession>
<name>HEMH_MARMS</name>
<sequence length="330" mass="37658">MKNTSDYGVLMMNLGTPDAPQTPEVRRYLREFLSDSRVVDLNPLIWKPILNLIILTIRPPKVAKIYQQVWMDEGSPLLVLSERLKEKVKEALSEKKGQTVPVELAMTYGNPSVEVAANKLREQGVKNIIVIPMYPQFSATTTAAAYDRLMKSLKNCPHWPSLQLLHDYADHPMYIKALSNSVRAQWDKQGERRHLVLSYHGIPKRYVTNGDPYARRCETTSRLVAEELELGDHEWTHVYQSRFGREEWLKPYADATLKALPSMGVKKINIISPAFSIDCIETLEEVTLELGDEFKNNGGLAFDYIPALNDTPDQVALYVNLIEQNSKQWT</sequence>
<comment type="function">
    <text evidence="1">Catalyzes the ferrous insertion into protoporphyrin IX.</text>
</comment>
<comment type="catalytic activity">
    <reaction evidence="1">
        <text>heme b + 2 H(+) = protoporphyrin IX + Fe(2+)</text>
        <dbReference type="Rhea" id="RHEA:22584"/>
        <dbReference type="ChEBI" id="CHEBI:15378"/>
        <dbReference type="ChEBI" id="CHEBI:29033"/>
        <dbReference type="ChEBI" id="CHEBI:57306"/>
        <dbReference type="ChEBI" id="CHEBI:60344"/>
        <dbReference type="EC" id="4.98.1.1"/>
    </reaction>
</comment>
<comment type="pathway">
    <text evidence="1">Porphyrin-containing compound metabolism; protoheme biosynthesis; protoheme from protoporphyrin-IX: step 1/1.</text>
</comment>
<comment type="subcellular location">
    <subcellularLocation>
        <location evidence="1">Cytoplasm</location>
    </subcellularLocation>
</comment>
<comment type="similarity">
    <text evidence="1">Belongs to the ferrochelatase family.</text>
</comment>
<feature type="chain" id="PRO_1000119612" description="Ferrochelatase">
    <location>
        <begin position="1"/>
        <end position="330"/>
    </location>
</feature>
<feature type="binding site" evidence="1">
    <location>
        <position position="200"/>
    </location>
    <ligand>
        <name>Fe cation</name>
        <dbReference type="ChEBI" id="CHEBI:24875"/>
    </ligand>
</feature>
<feature type="binding site" evidence="1">
    <location>
        <position position="281"/>
    </location>
    <ligand>
        <name>Fe cation</name>
        <dbReference type="ChEBI" id="CHEBI:24875"/>
    </ligand>
</feature>
<gene>
    <name evidence="1" type="primary">hemH</name>
    <name type="ordered locus">Mmwyl1_2215</name>
</gene>
<evidence type="ECO:0000255" key="1">
    <source>
        <dbReference type="HAMAP-Rule" id="MF_00323"/>
    </source>
</evidence>
<protein>
    <recommendedName>
        <fullName evidence="1">Ferrochelatase</fullName>
        <ecNumber evidence="1">4.98.1.1</ecNumber>
    </recommendedName>
    <alternativeName>
        <fullName evidence="1">Heme synthase</fullName>
    </alternativeName>
    <alternativeName>
        <fullName evidence="1">Protoheme ferro-lyase</fullName>
    </alternativeName>
</protein>
<proteinExistence type="inferred from homology"/>